<evidence type="ECO:0000250" key="1"/>
<evidence type="ECO:0000305" key="2"/>
<feature type="chain" id="PRO_0000194242" description="Mannose-6-phosphate isomerase">
    <location>
        <begin position="1"/>
        <end position="429"/>
    </location>
</feature>
<feature type="active site" evidence="1">
    <location>
        <position position="301"/>
    </location>
</feature>
<feature type="binding site" evidence="1">
    <location>
        <position position="110"/>
    </location>
    <ligand>
        <name>Zn(2+)</name>
        <dbReference type="ChEBI" id="CHEBI:29105"/>
    </ligand>
</feature>
<feature type="binding site" evidence="1">
    <location>
        <position position="112"/>
    </location>
    <ligand>
        <name>Zn(2+)</name>
        <dbReference type="ChEBI" id="CHEBI:29105"/>
    </ligand>
</feature>
<feature type="binding site" evidence="1">
    <location>
        <position position="137"/>
    </location>
    <ligand>
        <name>Zn(2+)</name>
        <dbReference type="ChEBI" id="CHEBI:29105"/>
    </ligand>
</feature>
<feature type="binding site" evidence="1">
    <location>
        <position position="282"/>
    </location>
    <ligand>
        <name>Zn(2+)</name>
        <dbReference type="ChEBI" id="CHEBI:29105"/>
    </ligand>
</feature>
<sequence length="429" mass="47589">MTSDRFFRLDAGYQQYDWGKIGSSSAVAKFAAHSDPSVKIDETKPYAELWMGTHSKLPSVNHETKATLNDILAKNSQELIGEDVINKFKSTNELPFLFKVLSIEKVLSIQAHPDKELGKKLHMEDPKNYPDDNHKPEMAVAITEFEGFCGFKPLEEIADELETIPEFRDVVGDEVANEFIQNYKTGVENSSSACANNKKLLQKVFEKVMTAPCDILEKNADGMAKRANENPSSFKSSDLPELVVRLNRQFPKDVGLFCGCLMLNHCKLQPGQALFLEAKDPHAYICGDIIECMAASDNVVRAGFTPKFKDVKNLVEMLTYRYDPVEKQVMSAEEFPRAGGDGATIMYNPPIAEFSVLETTFKNKTGKATVEGLKGPSIVITTAGEGYISADGQKLKAEPGFVFFIGANVPVELETTDKDFTTYRAFVEA</sequence>
<comment type="function">
    <text evidence="1">Involved in the synthesis of the GDP-mannose and dolichol-phosphate-mannose required for a number of critical mannosyl transfer reactions.</text>
</comment>
<comment type="catalytic activity">
    <reaction>
        <text>D-mannose 6-phosphate = D-fructose 6-phosphate</text>
        <dbReference type="Rhea" id="RHEA:12356"/>
        <dbReference type="ChEBI" id="CHEBI:58735"/>
        <dbReference type="ChEBI" id="CHEBI:61527"/>
        <dbReference type="EC" id="5.3.1.8"/>
    </reaction>
</comment>
<comment type="cofactor">
    <cofactor evidence="1">
        <name>Zn(2+)</name>
        <dbReference type="ChEBI" id="CHEBI:29105"/>
    </cofactor>
    <text evidence="1">Binds 1 zinc ion per subunit.</text>
</comment>
<comment type="pathway">
    <text>Nucleotide-sugar biosynthesis; GDP-alpha-D-mannose biosynthesis; alpha-D-mannose 1-phosphate from D-fructose 6-phosphate: step 1/2.</text>
</comment>
<comment type="subcellular location">
    <subcellularLocation>
        <location evidence="1">Cytoplasm</location>
    </subcellularLocation>
</comment>
<comment type="similarity">
    <text evidence="2">Belongs to the mannose-6-phosphate isomerase type 1 family.</text>
</comment>
<gene>
    <name type="primary">PMI1</name>
    <name type="synonym">PMI40</name>
    <name type="ordered locus">CAGL0J02244g</name>
</gene>
<keyword id="KW-0963">Cytoplasm</keyword>
<keyword id="KW-0413">Isomerase</keyword>
<keyword id="KW-0479">Metal-binding</keyword>
<keyword id="KW-1185">Reference proteome</keyword>
<keyword id="KW-0862">Zinc</keyword>
<accession>Q76IQ2</accession>
<proteinExistence type="inferred from homology"/>
<reference key="1">
    <citation type="submission" date="2002-11" db="EMBL/GenBank/DDBJ databases">
        <title>Isolation of the Candida glabrata PMI1 encoding phosphomannose isomerase gene.</title>
        <authorList>
            <person name="Nakayama H."/>
            <person name="Ohta A."/>
            <person name="Arisawa M."/>
            <person name="Sudoh M."/>
        </authorList>
    </citation>
    <scope>NUCLEOTIDE SEQUENCE [GENOMIC DNA]</scope>
    <source>
        <strain>ATCC 2001 / BCRC 20586 / JCM 3761 / NBRC 0622 / NRRL Y-65 / CBS 138</strain>
    </source>
</reference>
<reference key="2">
    <citation type="journal article" date="2004" name="Nature">
        <title>Genome evolution in yeasts.</title>
        <authorList>
            <person name="Dujon B."/>
            <person name="Sherman D."/>
            <person name="Fischer G."/>
            <person name="Durrens P."/>
            <person name="Casaregola S."/>
            <person name="Lafontaine I."/>
            <person name="de Montigny J."/>
            <person name="Marck C."/>
            <person name="Neuveglise C."/>
            <person name="Talla E."/>
            <person name="Goffard N."/>
            <person name="Frangeul L."/>
            <person name="Aigle M."/>
            <person name="Anthouard V."/>
            <person name="Babour A."/>
            <person name="Barbe V."/>
            <person name="Barnay S."/>
            <person name="Blanchin S."/>
            <person name="Beckerich J.-M."/>
            <person name="Beyne E."/>
            <person name="Bleykasten C."/>
            <person name="Boisrame A."/>
            <person name="Boyer J."/>
            <person name="Cattolico L."/>
            <person name="Confanioleri F."/>
            <person name="de Daruvar A."/>
            <person name="Despons L."/>
            <person name="Fabre E."/>
            <person name="Fairhead C."/>
            <person name="Ferry-Dumazet H."/>
            <person name="Groppi A."/>
            <person name="Hantraye F."/>
            <person name="Hennequin C."/>
            <person name="Jauniaux N."/>
            <person name="Joyet P."/>
            <person name="Kachouri R."/>
            <person name="Kerrest A."/>
            <person name="Koszul R."/>
            <person name="Lemaire M."/>
            <person name="Lesur I."/>
            <person name="Ma L."/>
            <person name="Muller H."/>
            <person name="Nicaud J.-M."/>
            <person name="Nikolski M."/>
            <person name="Oztas S."/>
            <person name="Ozier-Kalogeropoulos O."/>
            <person name="Pellenz S."/>
            <person name="Potier S."/>
            <person name="Richard G.-F."/>
            <person name="Straub M.-L."/>
            <person name="Suleau A."/>
            <person name="Swennen D."/>
            <person name="Tekaia F."/>
            <person name="Wesolowski-Louvel M."/>
            <person name="Westhof E."/>
            <person name="Wirth B."/>
            <person name="Zeniou-Meyer M."/>
            <person name="Zivanovic Y."/>
            <person name="Bolotin-Fukuhara M."/>
            <person name="Thierry A."/>
            <person name="Bouchier C."/>
            <person name="Caudron B."/>
            <person name="Scarpelli C."/>
            <person name="Gaillardin C."/>
            <person name="Weissenbach J."/>
            <person name="Wincker P."/>
            <person name="Souciet J.-L."/>
        </authorList>
    </citation>
    <scope>NUCLEOTIDE SEQUENCE [LARGE SCALE GENOMIC DNA]</scope>
    <source>
        <strain>ATCC 2001 / BCRC 20586 / JCM 3761 / NBRC 0622 / NRRL Y-65 / CBS 138</strain>
    </source>
</reference>
<protein>
    <recommendedName>
        <fullName>Mannose-6-phosphate isomerase</fullName>
        <ecNumber>5.3.1.8</ecNumber>
    </recommendedName>
    <alternativeName>
        <fullName>Phosphohexomutase</fullName>
    </alternativeName>
    <alternativeName>
        <fullName>Phosphomannose isomerase</fullName>
        <shortName>PMI</shortName>
    </alternativeName>
</protein>
<dbReference type="EC" id="5.3.1.8"/>
<dbReference type="EMBL" id="AB097082">
    <property type="protein sequence ID" value="BAD02470.1"/>
    <property type="molecule type" value="Genomic_DNA"/>
</dbReference>
<dbReference type="EMBL" id="CR380956">
    <property type="protein sequence ID" value="CAG60751.1"/>
    <property type="molecule type" value="Genomic_DNA"/>
</dbReference>
<dbReference type="RefSeq" id="XP_447802.1">
    <property type="nucleotide sequence ID" value="XM_447802.1"/>
</dbReference>
<dbReference type="SMR" id="Q76IQ2"/>
<dbReference type="FunCoup" id="Q76IQ2">
    <property type="interactions" value="882"/>
</dbReference>
<dbReference type="STRING" id="284593.Q76IQ2"/>
<dbReference type="EnsemblFungi" id="CAGL0J02244g-T">
    <property type="protein sequence ID" value="CAGL0J02244g-T-p1"/>
    <property type="gene ID" value="CAGL0J02244g"/>
</dbReference>
<dbReference type="KEGG" id="cgr:2889794"/>
<dbReference type="CGD" id="CAL0133206">
    <property type="gene designation" value="CAGL0J02244g"/>
</dbReference>
<dbReference type="VEuPathDB" id="FungiDB:B1J91_J02244g"/>
<dbReference type="VEuPathDB" id="FungiDB:CAGL0J02244g"/>
<dbReference type="eggNOG" id="KOG2757">
    <property type="taxonomic scope" value="Eukaryota"/>
</dbReference>
<dbReference type="HOGENOM" id="CLU_026967_0_0_1"/>
<dbReference type="InParanoid" id="Q76IQ2"/>
<dbReference type="OMA" id="DIGLFCG"/>
<dbReference type="UniPathway" id="UPA00126">
    <property type="reaction ID" value="UER00423"/>
</dbReference>
<dbReference type="Proteomes" id="UP000002428">
    <property type="component" value="Chromosome J"/>
</dbReference>
<dbReference type="GO" id="GO:0005829">
    <property type="term" value="C:cytosol"/>
    <property type="evidence" value="ECO:0007669"/>
    <property type="project" value="TreeGrafter"/>
</dbReference>
<dbReference type="GO" id="GO:0004476">
    <property type="term" value="F:mannose-6-phosphate isomerase activity"/>
    <property type="evidence" value="ECO:0007669"/>
    <property type="project" value="UniProtKB-EC"/>
</dbReference>
<dbReference type="GO" id="GO:0008270">
    <property type="term" value="F:zinc ion binding"/>
    <property type="evidence" value="ECO:0007669"/>
    <property type="project" value="InterPro"/>
</dbReference>
<dbReference type="GO" id="GO:0005975">
    <property type="term" value="P:carbohydrate metabolic process"/>
    <property type="evidence" value="ECO:0007669"/>
    <property type="project" value="InterPro"/>
</dbReference>
<dbReference type="GO" id="GO:0000032">
    <property type="term" value="P:cell wall mannoprotein biosynthetic process"/>
    <property type="evidence" value="ECO:0007669"/>
    <property type="project" value="EnsemblFungi"/>
</dbReference>
<dbReference type="GO" id="GO:0009298">
    <property type="term" value="P:GDP-mannose biosynthetic process"/>
    <property type="evidence" value="ECO:0007669"/>
    <property type="project" value="UniProtKB-UniPathway"/>
</dbReference>
<dbReference type="GO" id="GO:0006486">
    <property type="term" value="P:protein glycosylation"/>
    <property type="evidence" value="ECO:0007669"/>
    <property type="project" value="EnsemblFungi"/>
</dbReference>
<dbReference type="CDD" id="cd07011">
    <property type="entry name" value="cupin_PMI_type_I_N"/>
    <property type="match status" value="1"/>
</dbReference>
<dbReference type="FunFam" id="1.10.441.10:FF:000001">
    <property type="entry name" value="Mannose-6-phosphate isomerase"/>
    <property type="match status" value="1"/>
</dbReference>
<dbReference type="Gene3D" id="2.60.120.10">
    <property type="entry name" value="Jelly Rolls"/>
    <property type="match status" value="2"/>
</dbReference>
<dbReference type="Gene3D" id="1.10.441.10">
    <property type="entry name" value="Phosphomannose Isomerase, domain 2"/>
    <property type="match status" value="1"/>
</dbReference>
<dbReference type="InterPro" id="IPR001250">
    <property type="entry name" value="Man6P_Isoase-1"/>
</dbReference>
<dbReference type="InterPro" id="IPR016305">
    <property type="entry name" value="Mannose-6-P_Isomerase"/>
</dbReference>
<dbReference type="InterPro" id="IPR018050">
    <property type="entry name" value="Pmannose_isomerase-type1_CS"/>
</dbReference>
<dbReference type="InterPro" id="IPR046456">
    <property type="entry name" value="PMI_typeI_C"/>
</dbReference>
<dbReference type="InterPro" id="IPR046457">
    <property type="entry name" value="PMI_typeI_cat"/>
</dbReference>
<dbReference type="InterPro" id="IPR046458">
    <property type="entry name" value="PMI_typeI_hel"/>
</dbReference>
<dbReference type="InterPro" id="IPR014710">
    <property type="entry name" value="RmlC-like_jellyroll"/>
</dbReference>
<dbReference type="InterPro" id="IPR011051">
    <property type="entry name" value="RmlC_Cupin_sf"/>
</dbReference>
<dbReference type="NCBIfam" id="TIGR00218">
    <property type="entry name" value="manA"/>
    <property type="match status" value="1"/>
</dbReference>
<dbReference type="PANTHER" id="PTHR10309">
    <property type="entry name" value="MANNOSE-6-PHOSPHATE ISOMERASE"/>
    <property type="match status" value="1"/>
</dbReference>
<dbReference type="PANTHER" id="PTHR10309:SF0">
    <property type="entry name" value="MANNOSE-6-PHOSPHATE ISOMERASE"/>
    <property type="match status" value="1"/>
</dbReference>
<dbReference type="Pfam" id="PF01238">
    <property type="entry name" value="PMI_typeI_C"/>
    <property type="match status" value="1"/>
</dbReference>
<dbReference type="Pfam" id="PF20511">
    <property type="entry name" value="PMI_typeI_cat"/>
    <property type="match status" value="1"/>
</dbReference>
<dbReference type="Pfam" id="PF20512">
    <property type="entry name" value="PMI_typeI_hel"/>
    <property type="match status" value="1"/>
</dbReference>
<dbReference type="PIRSF" id="PIRSF001480">
    <property type="entry name" value="Mannose-6-phosphate_isomerase"/>
    <property type="match status" value="1"/>
</dbReference>
<dbReference type="PRINTS" id="PR00714">
    <property type="entry name" value="MAN6PISMRASE"/>
</dbReference>
<dbReference type="SUPFAM" id="SSF51182">
    <property type="entry name" value="RmlC-like cupins"/>
    <property type="match status" value="1"/>
</dbReference>
<dbReference type="PROSITE" id="PS00965">
    <property type="entry name" value="PMI_I_1"/>
    <property type="match status" value="1"/>
</dbReference>
<dbReference type="PROSITE" id="PS00966">
    <property type="entry name" value="PMI_I_2"/>
    <property type="match status" value="1"/>
</dbReference>
<organism>
    <name type="scientific">Candida glabrata (strain ATCC 2001 / BCRC 20586 / JCM 3761 / NBRC 0622 / NRRL Y-65 / CBS 138)</name>
    <name type="common">Yeast</name>
    <name type="synonym">Nakaseomyces glabratus</name>
    <dbReference type="NCBI Taxonomy" id="284593"/>
    <lineage>
        <taxon>Eukaryota</taxon>
        <taxon>Fungi</taxon>
        <taxon>Dikarya</taxon>
        <taxon>Ascomycota</taxon>
        <taxon>Saccharomycotina</taxon>
        <taxon>Saccharomycetes</taxon>
        <taxon>Saccharomycetales</taxon>
        <taxon>Saccharomycetaceae</taxon>
        <taxon>Nakaseomyces</taxon>
    </lineage>
</organism>
<name>MPI_CANGA</name>